<proteinExistence type="predicted"/>
<reference key="1">
    <citation type="journal article" date="1996" name="Nucleic Acids Res.">
        <title>Complete sequence analysis of the genome of the bacterium Mycoplasma pneumoniae.</title>
        <authorList>
            <person name="Himmelreich R."/>
            <person name="Hilbert H."/>
            <person name="Plagens H."/>
            <person name="Pirkl E."/>
            <person name="Li B.-C."/>
            <person name="Herrmann R."/>
        </authorList>
    </citation>
    <scope>NUCLEOTIDE SEQUENCE [LARGE SCALE GENOMIC DNA]</scope>
    <source>
        <strain>ATCC 29342 / M129 / Subtype 1</strain>
    </source>
</reference>
<protein>
    <recommendedName>
        <fullName>Uncharacterized protein MG211 homolog</fullName>
    </recommendedName>
</protein>
<organism>
    <name type="scientific">Mycoplasma pneumoniae (strain ATCC 29342 / M129 / Subtype 1)</name>
    <name type="common">Mycoplasmoides pneumoniae</name>
    <dbReference type="NCBI Taxonomy" id="272634"/>
    <lineage>
        <taxon>Bacteria</taxon>
        <taxon>Bacillati</taxon>
        <taxon>Mycoplasmatota</taxon>
        <taxon>Mycoplasmoidales</taxon>
        <taxon>Mycoplasmoidaceae</taxon>
        <taxon>Mycoplasmoides</taxon>
    </lineage>
</organism>
<feature type="chain" id="PRO_0000210459" description="Uncharacterized protein MG211 homolog">
    <location>
        <begin position="1"/>
        <end position="149"/>
    </location>
</feature>
<gene>
    <name type="ordered locus">MPN_297</name>
    <name type="ORF">H10_orf149</name>
    <name type="ORF">MP539</name>
</gene>
<accession>P75481</accession>
<sequence>MDNDKKDKIILSGELTNHRFNFTKDGENGYSAYEVDRFLDQLVHTLTHYEAQRNREEEMKTAYEKLFQDRDEILKRCSKLEAELNNFYENGYSNRVLISRVQALENKIESLPSGQNDRLERIEKLLKRVIKHWTDGEDLSYGDFDDDFF</sequence>
<dbReference type="EMBL" id="U00089">
    <property type="protein sequence ID" value="AAB96187.1"/>
    <property type="molecule type" value="Genomic_DNA"/>
</dbReference>
<dbReference type="PIR" id="S73865">
    <property type="entry name" value="S73865"/>
</dbReference>
<dbReference type="RefSeq" id="NP_109985.1">
    <property type="nucleotide sequence ID" value="NC_000912.1"/>
</dbReference>
<dbReference type="RefSeq" id="WP_010874654.1">
    <property type="nucleotide sequence ID" value="NZ_OU342337.1"/>
</dbReference>
<dbReference type="SMR" id="P75481"/>
<dbReference type="IntAct" id="P75481">
    <property type="interactions" value="1"/>
</dbReference>
<dbReference type="STRING" id="272634.MPN_297"/>
<dbReference type="EnsemblBacteria" id="AAB96187">
    <property type="protein sequence ID" value="AAB96187"/>
    <property type="gene ID" value="MPN_297"/>
</dbReference>
<dbReference type="KEGG" id="mpn:MPN_297"/>
<dbReference type="PATRIC" id="fig|272634.6.peg.321"/>
<dbReference type="HOGENOM" id="CLU_1765977_0_0_14"/>
<dbReference type="OrthoDB" id="389699at2"/>
<dbReference type="BioCyc" id="MPNE272634:G1GJ3-466-MONOMER"/>
<dbReference type="Proteomes" id="UP000000808">
    <property type="component" value="Chromosome"/>
</dbReference>
<dbReference type="Gene3D" id="6.10.250.660">
    <property type="match status" value="1"/>
</dbReference>
<dbReference type="InterPro" id="IPR019933">
    <property type="entry name" value="DivIVA_domain"/>
</dbReference>
<dbReference type="NCBIfam" id="TIGR03544">
    <property type="entry name" value="DivI1A_domain"/>
    <property type="match status" value="1"/>
</dbReference>
<name>Y297_MYCPN</name>
<keyword id="KW-1185">Reference proteome</keyword>